<protein>
    <recommendedName>
        <fullName evidence="2">Peptide chain release factor 2</fullName>
        <shortName evidence="2">RF-2</shortName>
    </recommendedName>
</protein>
<sequence>MFEINPIRNKISDLTERTQVLRGYLDFDAKVERLEEVNAELEQPDVWNEPEKAQALGKERVALEGVVNTIHTLDQGLEDVEGLLELAIEAEDEATFHEAVAELEELEQQLAKLEFRRMFSGQHDAADCYVDLQAGSGGTEAQDWTEMLLRMYLRWAESKGFKTELMEVSDGDVAGIKSATIKVSGEYAFGWLRTETGIHRLVRKSPFDSNNRRHTSFSAAFVYPEIDDDIDIDINPADLRIDVYRASGAGGQHVNKTESAVRITHIPSGIVVQCQNDRSQHKNKDQCMKQLKAKLYEMELQKKNADKQAMEDNKSDIGWGSQIRSYVLDDSRIKDLRTGVENRNTQAVLDGDLDRFIEASLKAGL</sequence>
<reference key="1">
    <citation type="journal article" date="2001" name="Proc. Natl. Acad. Sci. U.S.A.">
        <title>Complete genomic sequence of Pasteurella multocida Pm70.</title>
        <authorList>
            <person name="May B.J."/>
            <person name="Zhang Q."/>
            <person name="Li L.L."/>
            <person name="Paustian M.L."/>
            <person name="Whittam T.S."/>
            <person name="Kapur V."/>
        </authorList>
    </citation>
    <scope>NUCLEOTIDE SEQUENCE [LARGE SCALE GENOMIC DNA]</scope>
    <source>
        <strain>Pm70</strain>
    </source>
</reference>
<feature type="chain" id="PRO_0000166837" description="Peptide chain release factor 2">
    <location>
        <begin position="1"/>
        <end position="365"/>
    </location>
</feature>
<feature type="modified residue" description="N5-methylglutamine" evidence="2">
    <location>
        <position position="252"/>
    </location>
</feature>
<dbReference type="EMBL" id="AE004439">
    <property type="protein sequence ID" value="AAK02274.1"/>
    <property type="status" value="ALT_SEQ"/>
    <property type="molecule type" value="Genomic_DNA"/>
</dbReference>
<dbReference type="SMR" id="Q9CP66"/>
<dbReference type="STRING" id="272843.PM0190"/>
<dbReference type="EnsemblBacteria" id="AAK02274">
    <property type="protein sequence ID" value="AAK02274"/>
    <property type="gene ID" value="PM0190"/>
</dbReference>
<dbReference type="KEGG" id="pmu:PM0190"/>
<dbReference type="HOGENOM" id="CLU_036856_6_0_6"/>
<dbReference type="OrthoDB" id="9806673at2"/>
<dbReference type="Proteomes" id="UP000000809">
    <property type="component" value="Chromosome"/>
</dbReference>
<dbReference type="GO" id="GO:0005737">
    <property type="term" value="C:cytoplasm"/>
    <property type="evidence" value="ECO:0007669"/>
    <property type="project" value="UniProtKB-SubCell"/>
</dbReference>
<dbReference type="GO" id="GO:0016149">
    <property type="term" value="F:translation release factor activity, codon specific"/>
    <property type="evidence" value="ECO:0007669"/>
    <property type="project" value="UniProtKB-UniRule"/>
</dbReference>
<dbReference type="GO" id="GO:0075523">
    <property type="term" value="P:viral translational frameshifting"/>
    <property type="evidence" value="ECO:0007669"/>
    <property type="project" value="UniProtKB-KW"/>
</dbReference>
<dbReference type="FunFam" id="3.30.160.20:FF:000010">
    <property type="entry name" value="Peptide chain release factor 2"/>
    <property type="match status" value="1"/>
</dbReference>
<dbReference type="Gene3D" id="3.30.160.20">
    <property type="match status" value="1"/>
</dbReference>
<dbReference type="Gene3D" id="3.30.70.1660">
    <property type="match status" value="1"/>
</dbReference>
<dbReference type="Gene3D" id="1.20.58.410">
    <property type="entry name" value="Release factor"/>
    <property type="match status" value="1"/>
</dbReference>
<dbReference type="HAMAP" id="MF_00094">
    <property type="entry name" value="Rel_fac_2"/>
    <property type="match status" value="1"/>
</dbReference>
<dbReference type="InterPro" id="IPR005139">
    <property type="entry name" value="PCRF"/>
</dbReference>
<dbReference type="InterPro" id="IPR000352">
    <property type="entry name" value="Pep_chain_release_fac_I"/>
</dbReference>
<dbReference type="InterPro" id="IPR045853">
    <property type="entry name" value="Pep_chain_release_fac_I_sf"/>
</dbReference>
<dbReference type="InterPro" id="IPR004374">
    <property type="entry name" value="PrfB"/>
</dbReference>
<dbReference type="NCBIfam" id="TIGR00020">
    <property type="entry name" value="prfB"/>
    <property type="match status" value="1"/>
</dbReference>
<dbReference type="PANTHER" id="PTHR43116:SF3">
    <property type="entry name" value="CLASS I PEPTIDE CHAIN RELEASE FACTOR"/>
    <property type="match status" value="1"/>
</dbReference>
<dbReference type="PANTHER" id="PTHR43116">
    <property type="entry name" value="PEPTIDE CHAIN RELEASE FACTOR 2"/>
    <property type="match status" value="1"/>
</dbReference>
<dbReference type="Pfam" id="PF03462">
    <property type="entry name" value="PCRF"/>
    <property type="match status" value="1"/>
</dbReference>
<dbReference type="Pfam" id="PF00472">
    <property type="entry name" value="RF-1"/>
    <property type="match status" value="1"/>
</dbReference>
<dbReference type="SMART" id="SM00937">
    <property type="entry name" value="PCRF"/>
    <property type="match status" value="1"/>
</dbReference>
<dbReference type="SUPFAM" id="SSF75620">
    <property type="entry name" value="Release factor"/>
    <property type="match status" value="1"/>
</dbReference>
<dbReference type="PROSITE" id="PS00745">
    <property type="entry name" value="RF_PROK_I"/>
    <property type="match status" value="1"/>
</dbReference>
<proteinExistence type="inferred from homology"/>
<accession>Q9CP66</accession>
<organism>
    <name type="scientific">Pasteurella multocida (strain Pm70)</name>
    <dbReference type="NCBI Taxonomy" id="272843"/>
    <lineage>
        <taxon>Bacteria</taxon>
        <taxon>Pseudomonadati</taxon>
        <taxon>Pseudomonadota</taxon>
        <taxon>Gammaproteobacteria</taxon>
        <taxon>Pasteurellales</taxon>
        <taxon>Pasteurellaceae</taxon>
        <taxon>Pasteurella</taxon>
    </lineage>
</organism>
<comment type="function">
    <text evidence="2">Peptide chain release factor 2 directs the termination of translation in response to the peptide chain termination codons UGA and UAA.</text>
</comment>
<comment type="subcellular location">
    <subcellularLocation>
        <location evidence="2">Cytoplasm</location>
    </subcellularLocation>
</comment>
<comment type="PTM">
    <text evidence="2">Methylated by PrmC. Methylation increases the termination efficiency of RF2.</text>
</comment>
<comment type="miscellaneous">
    <text evidence="1">The gene for this protein contains a UGA in-frame termination codon after Leu-25; a naturally occurring frameshift enables complete translation of RF-2. This provides a mechanism for the protein to regulate its own production (By similarity).</text>
</comment>
<comment type="similarity">
    <text evidence="2">Belongs to the prokaryotic/mitochondrial release factor family.</text>
</comment>
<keyword id="KW-0963">Cytoplasm</keyword>
<keyword id="KW-0488">Methylation</keyword>
<keyword id="KW-0648">Protein biosynthesis</keyword>
<keyword id="KW-1185">Reference proteome</keyword>
<keyword id="KW-0688">Ribosomal frameshifting</keyword>
<gene>
    <name evidence="2" type="primary">prfB</name>
    <name type="ordered locus">PM0190</name>
</gene>
<name>RF2_PASMU</name>
<evidence type="ECO:0000250" key="1"/>
<evidence type="ECO:0000255" key="2">
    <source>
        <dbReference type="HAMAP-Rule" id="MF_00094"/>
    </source>
</evidence>